<accession>P80724</accession>
<accession>O02692</accession>
<accession>Q08E19</accession>
<evidence type="ECO:0000250" key="1">
    <source>
        <dbReference type="UniProtKB" id="P80723"/>
    </source>
</evidence>
<evidence type="ECO:0000250" key="2">
    <source>
        <dbReference type="UniProtKB" id="Q91XV3"/>
    </source>
</evidence>
<evidence type="ECO:0000256" key="3">
    <source>
        <dbReference type="SAM" id="MobiDB-lite"/>
    </source>
</evidence>
<evidence type="ECO:0000269" key="4">
    <source>
    </source>
</evidence>
<evidence type="ECO:0000305" key="5"/>
<dbReference type="EMBL" id="U92535">
    <property type="protein sequence ID" value="AAC67307.1"/>
    <property type="molecule type" value="mRNA"/>
</dbReference>
<dbReference type="EMBL" id="BC123462">
    <property type="protein sequence ID" value="AAI23463.1"/>
    <property type="molecule type" value="mRNA"/>
</dbReference>
<dbReference type="RefSeq" id="NP_777205.1">
    <property type="nucleotide sequence ID" value="NM_174780.3"/>
</dbReference>
<dbReference type="RefSeq" id="XP_024836983.1">
    <property type="nucleotide sequence ID" value="XM_024981215.2"/>
</dbReference>
<dbReference type="RefSeq" id="XP_024836987.1">
    <property type="nucleotide sequence ID" value="XM_024981219.2"/>
</dbReference>
<dbReference type="FunCoup" id="P80724">
    <property type="interactions" value="343"/>
</dbReference>
<dbReference type="STRING" id="9913.ENSBTAP00000056785"/>
<dbReference type="iPTMnet" id="P80724"/>
<dbReference type="PeptideAtlas" id="P80724"/>
<dbReference type="Ensembl" id="ENSBTAT00000078276.2">
    <property type="protein sequence ID" value="ENSBTAP00000056785.1"/>
    <property type="gene ID" value="ENSBTAG00000048565.2"/>
</dbReference>
<dbReference type="Ensembl" id="ENSBTAT00000093606.1">
    <property type="protein sequence ID" value="ENSBTAP00000081896.1"/>
    <property type="gene ID" value="ENSBTAG00000048565.2"/>
</dbReference>
<dbReference type="Ensembl" id="ENSBTAT00000099322.1">
    <property type="protein sequence ID" value="ENSBTAP00000085357.1"/>
    <property type="gene ID" value="ENSBTAG00000048565.2"/>
</dbReference>
<dbReference type="Ensembl" id="ENSBTAT00000113106.1">
    <property type="protein sequence ID" value="ENSBTAP00000088422.1"/>
    <property type="gene ID" value="ENSBTAG00000048565.2"/>
</dbReference>
<dbReference type="Ensembl" id="ENSBTAT00000115092.1">
    <property type="protein sequence ID" value="ENSBTAP00000098423.1"/>
    <property type="gene ID" value="ENSBTAG00000048565.2"/>
</dbReference>
<dbReference type="Ensembl" id="ENSBTAT00000121113.1">
    <property type="protein sequence ID" value="ENSBTAP00000076053.1"/>
    <property type="gene ID" value="ENSBTAG00000048565.2"/>
</dbReference>
<dbReference type="Ensembl" id="ENSBTAT00000125911.1">
    <property type="protein sequence ID" value="ENSBTAP00000091676.1"/>
    <property type="gene ID" value="ENSBTAG00000048565.2"/>
</dbReference>
<dbReference type="GeneID" id="286842"/>
<dbReference type="KEGG" id="bta:286842"/>
<dbReference type="CTD" id="10409"/>
<dbReference type="VEuPathDB" id="HostDB:ENSBTAG00000048565"/>
<dbReference type="VGNC" id="VGNC:106649">
    <property type="gene designation" value="BASP1"/>
</dbReference>
<dbReference type="GeneTree" id="ENSGT00730000111450"/>
<dbReference type="InParanoid" id="P80724"/>
<dbReference type="OMA" id="EEFDHAE"/>
<dbReference type="OrthoDB" id="8964957at2759"/>
<dbReference type="Reactome" id="R-BTA-9035034">
    <property type="pathway name" value="RHOF GTPase cycle"/>
</dbReference>
<dbReference type="Proteomes" id="UP000009136">
    <property type="component" value="Chromosome 20"/>
</dbReference>
<dbReference type="Bgee" id="ENSBTAG00000048565">
    <property type="expression patterns" value="Expressed in Ammon's horn and 106 other cell types or tissues"/>
</dbReference>
<dbReference type="GO" id="GO:0030054">
    <property type="term" value="C:cell junction"/>
    <property type="evidence" value="ECO:0007669"/>
    <property type="project" value="Ensembl"/>
</dbReference>
<dbReference type="GO" id="GO:0008180">
    <property type="term" value="C:COP9 signalosome"/>
    <property type="evidence" value="ECO:0007669"/>
    <property type="project" value="Ensembl"/>
</dbReference>
<dbReference type="GO" id="GO:0005737">
    <property type="term" value="C:cytoplasm"/>
    <property type="evidence" value="ECO:0000250"/>
    <property type="project" value="UniProtKB"/>
</dbReference>
<dbReference type="GO" id="GO:0030426">
    <property type="term" value="C:growth cone"/>
    <property type="evidence" value="ECO:0007669"/>
    <property type="project" value="UniProtKB-SubCell"/>
</dbReference>
<dbReference type="GO" id="GO:0016363">
    <property type="term" value="C:nuclear matrix"/>
    <property type="evidence" value="ECO:0007669"/>
    <property type="project" value="Ensembl"/>
</dbReference>
<dbReference type="GO" id="GO:0016607">
    <property type="term" value="C:nuclear speck"/>
    <property type="evidence" value="ECO:0000250"/>
    <property type="project" value="UniProtKB"/>
</dbReference>
<dbReference type="GO" id="GO:0005634">
    <property type="term" value="C:nucleus"/>
    <property type="evidence" value="ECO:0000250"/>
    <property type="project" value="UniProtKB"/>
</dbReference>
<dbReference type="GO" id="GO:0005886">
    <property type="term" value="C:plasma membrane"/>
    <property type="evidence" value="ECO:0007669"/>
    <property type="project" value="UniProtKB-SubCell"/>
</dbReference>
<dbReference type="GO" id="GO:0016605">
    <property type="term" value="C:PML body"/>
    <property type="evidence" value="ECO:0007669"/>
    <property type="project" value="Ensembl"/>
</dbReference>
<dbReference type="GO" id="GO:0005516">
    <property type="term" value="F:calmodulin binding"/>
    <property type="evidence" value="ECO:0007669"/>
    <property type="project" value="Ensembl"/>
</dbReference>
<dbReference type="GO" id="GO:0019904">
    <property type="term" value="F:protein domain specific binding"/>
    <property type="evidence" value="ECO:0007669"/>
    <property type="project" value="Ensembl"/>
</dbReference>
<dbReference type="GO" id="GO:0000976">
    <property type="term" value="F:transcription cis-regulatory region binding"/>
    <property type="evidence" value="ECO:0000250"/>
    <property type="project" value="UniProtKB"/>
</dbReference>
<dbReference type="GO" id="GO:0003714">
    <property type="term" value="F:transcription corepressor activity"/>
    <property type="evidence" value="ECO:0000250"/>
    <property type="project" value="UniProtKB"/>
</dbReference>
<dbReference type="GO" id="GO:0045892">
    <property type="term" value="P:negative regulation of DNA-templated transcription"/>
    <property type="evidence" value="ECO:0000250"/>
    <property type="project" value="UniProtKB"/>
</dbReference>
<dbReference type="GO" id="GO:0051260">
    <property type="term" value="P:protein homooligomerization"/>
    <property type="evidence" value="ECO:0007669"/>
    <property type="project" value="Ensembl"/>
</dbReference>
<dbReference type="GO" id="GO:0097435">
    <property type="term" value="P:supramolecular fiber organization"/>
    <property type="evidence" value="ECO:0007669"/>
    <property type="project" value="Ensembl"/>
</dbReference>
<dbReference type="InterPro" id="IPR008408">
    <property type="entry name" value="BASP1"/>
</dbReference>
<dbReference type="PANTHER" id="PTHR23212">
    <property type="entry name" value="BRAIN ACID SOLUBLE PROTEIN 1"/>
    <property type="match status" value="1"/>
</dbReference>
<dbReference type="PANTHER" id="PTHR23212:SF0">
    <property type="entry name" value="BRAIN ACID SOLUBLE PROTEIN 1"/>
    <property type="match status" value="1"/>
</dbReference>
<dbReference type="Pfam" id="PF05466">
    <property type="entry name" value="BASP1"/>
    <property type="match status" value="1"/>
</dbReference>
<protein>
    <recommendedName>
        <fullName>Brain acid soluble protein 1</fullName>
    </recommendedName>
    <alternativeName>
        <fullName>22 kDa neuronal tissue-enriched acidic protein</fullName>
    </alternativeName>
    <alternativeName>
        <fullName>Neuronal axonal membrane protein NAP-22</fullName>
    </alternativeName>
</protein>
<name>BASP1_BOVIN</name>
<feature type="initiator methionine" description="Removed" evidence="4">
    <location>
        <position position="1"/>
    </location>
</feature>
<feature type="chain" id="PRO_0000142894" description="Brain acid soluble protein 1">
    <location>
        <begin position="2"/>
        <end position="227"/>
    </location>
</feature>
<feature type="region of interest" description="Disordered" evidence="3">
    <location>
        <begin position="1"/>
        <end position="227"/>
    </location>
</feature>
<feature type="compositionally biased region" description="Basic residues" evidence="3">
    <location>
        <begin position="1"/>
        <end position="11"/>
    </location>
</feature>
<feature type="compositionally biased region" description="Basic and acidic residues" evidence="3">
    <location>
        <begin position="15"/>
        <end position="27"/>
    </location>
</feature>
<feature type="compositionally biased region" description="Basic and acidic residues" evidence="3">
    <location>
        <begin position="49"/>
        <end position="107"/>
    </location>
</feature>
<feature type="compositionally biased region" description="Basic and acidic residues" evidence="3">
    <location>
        <begin position="137"/>
        <end position="150"/>
    </location>
</feature>
<feature type="compositionally biased region" description="Low complexity" evidence="3">
    <location>
        <begin position="151"/>
        <end position="161"/>
    </location>
</feature>
<feature type="compositionally biased region" description="Polar residues" evidence="3">
    <location>
        <begin position="172"/>
        <end position="185"/>
    </location>
</feature>
<feature type="compositionally biased region" description="Polar residues" evidence="3">
    <location>
        <begin position="216"/>
        <end position="227"/>
    </location>
</feature>
<feature type="modified residue" description="Phosphothreonine" evidence="1">
    <location>
        <position position="31"/>
    </location>
</feature>
<feature type="modified residue" description="Phosphothreonine" evidence="1">
    <location>
        <position position="36"/>
    </location>
</feature>
<feature type="modified residue" description="Phosphoserine" evidence="1">
    <location>
        <position position="164"/>
    </location>
</feature>
<feature type="modified residue" description="Phosphoserine" evidence="1">
    <location>
        <position position="170"/>
    </location>
</feature>
<feature type="modified residue" description="Phosphoserine" evidence="1">
    <location>
        <position position="172"/>
    </location>
</feature>
<feature type="modified residue" description="Phosphoserine" evidence="1">
    <location>
        <position position="176"/>
    </location>
</feature>
<feature type="modified residue" description="Phosphoserine" evidence="2">
    <location>
        <position position="195"/>
    </location>
</feature>
<feature type="modified residue" description="Phosphothreonine" evidence="1">
    <location>
        <position position="196"/>
    </location>
</feature>
<feature type="modified residue" description="Phosphoserine" evidence="1">
    <location>
        <position position="219"/>
    </location>
</feature>
<feature type="lipid moiety-binding region" description="N-myristoyl glycine" evidence="4">
    <location>
        <position position="2"/>
    </location>
</feature>
<feature type="cross-link" description="Glycyl lysine isopeptide (Lys-Gly) (interchain with G-Cter in SUMO2)" evidence="1">
    <location>
        <position position="25"/>
    </location>
</feature>
<feature type="cross-link" description="Glycyl lysine isopeptide (Lys-Gly) (interchain with G-Cter in SUMO2)" evidence="1">
    <location>
        <position position="87"/>
    </location>
</feature>
<feature type="cross-link" description="Glycyl lysine isopeptide (Lys-Gly) (interchain with G-Cter in SUMO2)" evidence="1">
    <location>
        <position position="99"/>
    </location>
</feature>
<feature type="cross-link" description="Glycyl lysine isopeptide (Lys-Gly) (interchain with G-Cter in SUMO2)" evidence="1">
    <location>
        <position position="163"/>
    </location>
</feature>
<reference key="1">
    <citation type="journal article" date="1998" name="Mol. Cells">
        <title>Characterization of bovine and human cDNAs encoding NAP-22 (22 kDa neuronal tissue-enriched acidic protein) homologs.</title>
        <authorList>
            <person name="Park S."/>
            <person name="Kim Y.-I."/>
            <person name="Kim B."/>
            <person name="Seong C."/>
            <person name="Oh Y."/>
            <person name="Baek K."/>
            <person name="Yoon J."/>
        </authorList>
    </citation>
    <scope>NUCLEOTIDE SEQUENCE [MRNA]</scope>
</reference>
<reference key="2">
    <citation type="submission" date="2006-09" db="EMBL/GenBank/DDBJ databases">
        <authorList>
            <consortium name="NIH - Mammalian Gene Collection (MGC) project"/>
        </authorList>
    </citation>
    <scope>NUCLEOTIDE SEQUENCE [LARGE SCALE MRNA]</scope>
    <source>
        <strain>Hereford</strain>
        <tissue>Thalamus</tissue>
    </source>
</reference>
<reference key="3">
    <citation type="journal article" date="1997" name="Biochimie">
        <title>The BASP1 family of myristoylated proteins abundant in axonal termini. Primary structure analysis and physico-chemical properties.</title>
        <authorList>
            <person name="Mosevitsky M.I."/>
            <person name="Capony J.-P."/>
            <person name="Skladchikova G.Y.U."/>
            <person name="Novitskaya V.A."/>
            <person name="Plekhanov A.Y.U."/>
            <person name="Zakharov V.V."/>
        </authorList>
    </citation>
    <scope>PROTEIN SEQUENCE OF 2-227</scope>
    <scope>MYRISTOYLATION AT GLY-2</scope>
    <source>
        <tissue>Brain</tissue>
    </source>
</reference>
<sequence length="227" mass="23011">MGGKLSKKKKGYNVNDEKAKDKDKKAEGAGTEEEGTPKENEAQAAAETPEVKEGKEEKPEKDAQDTTKPEDKEGEKDAEAAKEDAPKAEPEPTEGAEGKPEPPKDAEQEPAAASGPSTGGDAPKASEAEAAEPAAPTKDDKSKEGGDATKTEAPAAPAAQETKSDGAPASDSKPSSTEAAPSSKETPAATEAPSSTPKAQAPAAPADEVKPAETPAANSDQTVAVKE</sequence>
<gene>
    <name type="primary">BASP1</name>
    <name type="synonym">NAP22</name>
</gene>
<comment type="subcellular location">
    <subcellularLocation>
        <location>Cell membrane</location>
        <topology>Lipid-anchor</topology>
    </subcellularLocation>
    <subcellularLocation>
        <location>Cell projection</location>
        <location>Growth cone</location>
    </subcellularLocation>
    <text>Associated with the membranes of growth cones that form the tips of elongating axons.</text>
</comment>
<comment type="tissue specificity">
    <text>Brain.</text>
</comment>
<comment type="similarity">
    <text evidence="5">Belongs to the BASP1 family.</text>
</comment>
<proteinExistence type="evidence at protein level"/>
<organism>
    <name type="scientific">Bos taurus</name>
    <name type="common">Bovine</name>
    <dbReference type="NCBI Taxonomy" id="9913"/>
    <lineage>
        <taxon>Eukaryota</taxon>
        <taxon>Metazoa</taxon>
        <taxon>Chordata</taxon>
        <taxon>Craniata</taxon>
        <taxon>Vertebrata</taxon>
        <taxon>Euteleostomi</taxon>
        <taxon>Mammalia</taxon>
        <taxon>Eutheria</taxon>
        <taxon>Laurasiatheria</taxon>
        <taxon>Artiodactyla</taxon>
        <taxon>Ruminantia</taxon>
        <taxon>Pecora</taxon>
        <taxon>Bovidae</taxon>
        <taxon>Bovinae</taxon>
        <taxon>Bos</taxon>
    </lineage>
</organism>
<keyword id="KW-1003">Cell membrane</keyword>
<keyword id="KW-0966">Cell projection</keyword>
<keyword id="KW-0903">Direct protein sequencing</keyword>
<keyword id="KW-1017">Isopeptide bond</keyword>
<keyword id="KW-0449">Lipoprotein</keyword>
<keyword id="KW-0472">Membrane</keyword>
<keyword id="KW-0519">Myristate</keyword>
<keyword id="KW-0597">Phosphoprotein</keyword>
<keyword id="KW-1185">Reference proteome</keyword>
<keyword id="KW-0832">Ubl conjugation</keyword>